<proteinExistence type="evidence at protein level"/>
<organism>
    <name type="scientific">Vibrio sp. (strain N418)</name>
    <dbReference type="NCBI Taxonomy" id="701176"/>
    <lineage>
        <taxon>Bacteria</taxon>
        <taxon>Pseudomonadati</taxon>
        <taxon>Pseudomonadota</taxon>
        <taxon>Gammaproteobacteria</taxon>
        <taxon>Vibrionales</taxon>
        <taxon>Vibrionaceae</taxon>
        <taxon>Vibrio</taxon>
    </lineage>
</organism>
<dbReference type="EMBL" id="AFWD01000045">
    <property type="protein sequence ID" value="EGU34355.1"/>
    <property type="molecule type" value="Genomic_DNA"/>
</dbReference>
<dbReference type="RefSeq" id="WP_009733724.1">
    <property type="nucleotide sequence ID" value="NZ_AFWD01000045.1"/>
</dbReference>
<dbReference type="PDB" id="4QND">
    <property type="method" value="X-ray"/>
    <property type="resolution" value="1.70 A"/>
    <property type="chains" value="A=1-97"/>
</dbReference>
<dbReference type="PDB" id="9KON">
    <property type="method" value="NMR"/>
    <property type="chains" value="A/B=18-97"/>
</dbReference>
<dbReference type="PDBsum" id="4QND"/>
<dbReference type="PDBsum" id="9KON"/>
<dbReference type="SMR" id="F9RBV9"/>
<dbReference type="DIP" id="DIP-61075N"/>
<dbReference type="TCDB" id="2.A.123.3.1">
    <property type="family name" value="the sweet, pq-loop, saliva, mtn3 (sweet) family"/>
</dbReference>
<dbReference type="eggNOG" id="ENOG5031BAK">
    <property type="taxonomic scope" value="Bacteria"/>
</dbReference>
<dbReference type="EvolutionaryTrace" id="F9RBV9"/>
<dbReference type="Proteomes" id="UP000003627">
    <property type="component" value="Unassembled WGS sequence"/>
</dbReference>
<dbReference type="GO" id="GO:0016020">
    <property type="term" value="C:membrane"/>
    <property type="evidence" value="ECO:0000314"/>
    <property type="project" value="UniProtKB"/>
</dbReference>
<dbReference type="GO" id="GO:0005886">
    <property type="term" value="C:plasma membrane"/>
    <property type="evidence" value="ECO:0007669"/>
    <property type="project" value="UniProtKB-SubCell"/>
</dbReference>
<dbReference type="GO" id="GO:0042802">
    <property type="term" value="F:identical protein binding"/>
    <property type="evidence" value="ECO:0000353"/>
    <property type="project" value="IntAct"/>
</dbReference>
<dbReference type="FunFam" id="1.20.1280.290:FF:000107">
    <property type="entry name" value="Sugar transporter SemiSWEET"/>
    <property type="match status" value="1"/>
</dbReference>
<dbReference type="Gene3D" id="1.20.1280.290">
    <property type="match status" value="1"/>
</dbReference>
<dbReference type="NCBIfam" id="NF037969">
    <property type="entry name" value="SemiSWEET_3"/>
    <property type="match status" value="1"/>
</dbReference>
<protein>
    <recommendedName>
        <fullName>Sugar transporter SemiSWEET</fullName>
    </recommendedName>
</protein>
<comment type="function">
    <text evidence="1">The homodimer mediates transmembrane sugar transport down a concentration gradient. Transport is probably effected by rocking-type movements, where a cargo-binding cavity opens first on one and then on the other side of the membrane.</text>
</comment>
<comment type="subunit">
    <text evidence="3">Homodimer.</text>
</comment>
<comment type="interaction">
    <interactant intactId="EBI-16120089">
        <id>F9RBV9</id>
    </interactant>
    <interactant intactId="EBI-16120089">
        <id>F9RBV9</id>
        <label>VIBRN418_06191</label>
    </interactant>
    <organismsDiffer>false</organismsDiffer>
    <experiments>3</experiments>
</comment>
<comment type="subcellular location">
    <subcellularLocation>
        <location evidence="4">Cell membrane</location>
        <topology evidence="3">Multi-pass membrane protein</topology>
    </subcellularLocation>
</comment>
<feature type="chain" id="PRO_0000432578" description="Sugar transporter SemiSWEET">
    <location>
        <begin position="1"/>
        <end position="97"/>
    </location>
</feature>
<feature type="transmembrane region" description="Helical; Name=1" evidence="3">
    <location>
        <begin position="15"/>
        <end position="35"/>
    </location>
</feature>
<feature type="transmembrane region" description="Helical; Name=2" evidence="3">
    <location>
        <begin position="44"/>
        <end position="65"/>
    </location>
</feature>
<feature type="transmembrane region" description="Helical; Name=3" evidence="3">
    <location>
        <begin position="71"/>
        <end position="91"/>
    </location>
</feature>
<feature type="domain" description="PQ-loop" evidence="2">
    <location>
        <begin position="4"/>
        <end position="70"/>
    </location>
</feature>
<feature type="helix" evidence="7">
    <location>
        <begin position="2"/>
        <end position="11"/>
    </location>
</feature>
<feature type="helix" evidence="7">
    <location>
        <begin position="12"/>
        <end position="14"/>
    </location>
</feature>
<feature type="helix" evidence="7">
    <location>
        <begin position="15"/>
        <end position="25"/>
    </location>
</feature>
<feature type="helix" evidence="7">
    <location>
        <begin position="27"/>
        <end position="34"/>
    </location>
</feature>
<feature type="helix" evidence="7">
    <location>
        <begin position="38"/>
        <end position="43"/>
    </location>
</feature>
<feature type="helix" evidence="7">
    <location>
        <begin position="46"/>
        <end position="65"/>
    </location>
</feature>
<feature type="helix" evidence="7">
    <location>
        <begin position="69"/>
        <end position="93"/>
    </location>
</feature>
<keyword id="KW-0002">3D-structure</keyword>
<keyword id="KW-1003">Cell membrane</keyword>
<keyword id="KW-0472">Membrane</keyword>
<keyword id="KW-0762">Sugar transport</keyword>
<keyword id="KW-0812">Transmembrane</keyword>
<keyword id="KW-1133">Transmembrane helix</keyword>
<keyword id="KW-0813">Transport</keyword>
<name>SWEET_VIBSN</name>
<gene>
    <name evidence="5" type="ORF">VIBRN418_06191</name>
</gene>
<accession>F9RBV9</accession>
<sequence length="97" mass="10816">MALIERIGKALEPLMLVMGLISPLATMPQLYKLYVSHSEHALGLSLTTWLLYSFIALLWTIYGIYHKNPTIWVGNCLGFLMYVAMVVGIIAHTGGTY</sequence>
<evidence type="ECO:0000250" key="1">
    <source>
        <dbReference type="UniProtKB" id="B0SR19"/>
    </source>
</evidence>
<evidence type="ECO:0000255" key="2"/>
<evidence type="ECO:0000269" key="3">
    <source>
    </source>
</evidence>
<evidence type="ECO:0000305" key="4"/>
<evidence type="ECO:0000312" key="5">
    <source>
        <dbReference type="EMBL" id="EGU34355.1"/>
    </source>
</evidence>
<evidence type="ECO:0007744" key="6">
    <source>
        <dbReference type="PDB" id="4QND"/>
    </source>
</evidence>
<evidence type="ECO:0007829" key="7">
    <source>
        <dbReference type="PDB" id="4QND"/>
    </source>
</evidence>
<reference key="1">
    <citation type="submission" date="2011-08" db="EMBL/GenBank/DDBJ databases">
        <authorList>
            <person name="Strain E.A."/>
            <person name="Brown E."/>
            <person name="Allard M.W."/>
        </authorList>
    </citation>
    <scope>NUCLEOTIDE SEQUENCE [LARGE SCALE GENOMIC DNA]</scope>
    <source>
        <strain evidence="5">N418</strain>
    </source>
</reference>
<reference evidence="6" key="2">
    <citation type="journal article" date="2014" name="Nature">
        <title>Structures of bacterial homologues of SWEET transporters in two distinct conformations.</title>
        <authorList>
            <person name="Xu Y."/>
            <person name="Tao Y."/>
            <person name="Cheung L.S."/>
            <person name="Fan C."/>
            <person name="Chen L.Q."/>
            <person name="Xu S."/>
            <person name="Perry K."/>
            <person name="Frommer W.B."/>
            <person name="Feng L."/>
        </authorList>
    </citation>
    <scope>X-RAY CRYSTALLOGRAPHY (1.70 ANGSTROMS)</scope>
    <scope>SUBCELLULAR LOCATION</scope>
    <scope>SUBUNIT</scope>
</reference>